<feature type="chain" id="PRO_0000213762" description="Monomeric sarcosine oxidase">
    <location>
        <begin position="1"/>
        <end position="390"/>
    </location>
</feature>
<feature type="binding site" evidence="1">
    <location>
        <begin position="6"/>
        <end position="36"/>
    </location>
    <ligand>
        <name>FAD</name>
        <dbReference type="ChEBI" id="CHEBI:57692"/>
    </ligand>
</feature>
<feature type="modified residue" description="S-8alpha-FAD cysteine">
    <location>
        <position position="316"/>
    </location>
</feature>
<feature type="strand" evidence="6">
    <location>
        <begin position="5"/>
        <end position="10"/>
    </location>
</feature>
<feature type="helix" evidence="6">
    <location>
        <begin position="14"/>
        <end position="25"/>
    </location>
</feature>
<feature type="strand" evidence="6">
    <location>
        <begin position="30"/>
        <end position="33"/>
    </location>
</feature>
<feature type="strand" evidence="6">
    <location>
        <begin position="41"/>
        <end position="45"/>
    </location>
</feature>
<feature type="strand" evidence="6">
    <location>
        <begin position="47"/>
        <end position="52"/>
    </location>
</feature>
<feature type="helix" evidence="6">
    <location>
        <begin position="60"/>
        <end position="62"/>
    </location>
</feature>
<feature type="helix" evidence="6">
    <location>
        <begin position="63"/>
        <end position="79"/>
    </location>
</feature>
<feature type="strand" evidence="6">
    <location>
        <begin position="90"/>
        <end position="95"/>
    </location>
</feature>
<feature type="turn" evidence="8">
    <location>
        <begin position="96"/>
        <end position="98"/>
    </location>
</feature>
<feature type="helix" evidence="6">
    <location>
        <begin position="100"/>
        <end position="111"/>
    </location>
</feature>
<feature type="strand" evidence="6">
    <location>
        <begin position="117"/>
        <end position="120"/>
    </location>
</feature>
<feature type="helix" evidence="6">
    <location>
        <begin position="122"/>
        <end position="127"/>
    </location>
</feature>
<feature type="strand" evidence="6">
    <location>
        <begin position="137"/>
        <end position="142"/>
    </location>
</feature>
<feature type="strand" evidence="6">
    <location>
        <begin position="146"/>
        <end position="149"/>
    </location>
</feature>
<feature type="helix" evidence="6">
    <location>
        <begin position="150"/>
        <end position="163"/>
    </location>
</feature>
<feature type="strand" evidence="6">
    <location>
        <begin position="167"/>
        <end position="169"/>
    </location>
</feature>
<feature type="strand" evidence="6">
    <location>
        <begin position="174"/>
        <end position="179"/>
    </location>
</feature>
<feature type="strand" evidence="6">
    <location>
        <begin position="184"/>
        <end position="188"/>
    </location>
</feature>
<feature type="strand" evidence="6">
    <location>
        <begin position="191"/>
        <end position="200"/>
    </location>
</feature>
<feature type="helix" evidence="6">
    <location>
        <begin position="203"/>
        <end position="205"/>
    </location>
</feature>
<feature type="helix" evidence="6">
    <location>
        <begin position="206"/>
        <end position="209"/>
    </location>
</feature>
<feature type="helix" evidence="6">
    <location>
        <begin position="210"/>
        <end position="213"/>
    </location>
</feature>
<feature type="strand" evidence="6">
    <location>
        <begin position="220"/>
        <end position="229"/>
    </location>
</feature>
<feature type="helix" evidence="6">
    <location>
        <begin position="233"/>
        <end position="236"/>
    </location>
</feature>
<feature type="helix" evidence="6">
    <location>
        <begin position="238"/>
        <end position="240"/>
    </location>
</feature>
<feature type="strand" evidence="6">
    <location>
        <begin position="244"/>
        <end position="249"/>
    </location>
</feature>
<feature type="strand" evidence="6">
    <location>
        <begin position="252"/>
        <end position="257"/>
    </location>
</feature>
<feature type="strand" evidence="6">
    <location>
        <begin position="265"/>
        <end position="271"/>
    </location>
</feature>
<feature type="turn" evidence="6">
    <location>
        <begin position="278"/>
        <end position="280"/>
    </location>
</feature>
<feature type="strand" evidence="7">
    <location>
        <begin position="287"/>
        <end position="289"/>
    </location>
</feature>
<feature type="helix" evidence="6">
    <location>
        <begin position="290"/>
        <end position="302"/>
    </location>
</feature>
<feature type="helix" evidence="6">
    <location>
        <begin position="304"/>
        <end position="306"/>
    </location>
</feature>
<feature type="strand" evidence="6">
    <location>
        <begin position="310"/>
        <end position="320"/>
    </location>
</feature>
<feature type="strand" evidence="4">
    <location>
        <begin position="322"/>
        <end position="324"/>
    </location>
</feature>
<feature type="strand" evidence="6">
    <location>
        <begin position="327"/>
        <end position="331"/>
    </location>
</feature>
<feature type="strand" evidence="6">
    <location>
        <begin position="334"/>
        <end position="341"/>
    </location>
</feature>
<feature type="helix" evidence="6">
    <location>
        <begin position="348"/>
        <end position="350"/>
    </location>
</feature>
<feature type="helix" evidence="6">
    <location>
        <begin position="351"/>
        <end position="364"/>
    </location>
</feature>
<feature type="helix" evidence="6">
    <location>
        <begin position="372"/>
        <end position="374"/>
    </location>
</feature>
<feature type="helix" evidence="6">
    <location>
        <begin position="379"/>
        <end position="381"/>
    </location>
</feature>
<feature type="strand" evidence="5">
    <location>
        <begin position="384"/>
        <end position="386"/>
    </location>
</feature>
<name>MSOX_BACB0</name>
<evidence type="ECO:0000255" key="1"/>
<evidence type="ECO:0000269" key="2">
    <source>
    </source>
</evidence>
<evidence type="ECO:0000305" key="3"/>
<evidence type="ECO:0007829" key="4">
    <source>
        <dbReference type="PDB" id="1L9E"/>
    </source>
</evidence>
<evidence type="ECO:0007829" key="5">
    <source>
        <dbReference type="PDB" id="2GB0"/>
    </source>
</evidence>
<evidence type="ECO:0007829" key="6">
    <source>
        <dbReference type="PDB" id="2GF3"/>
    </source>
</evidence>
<evidence type="ECO:0007829" key="7">
    <source>
        <dbReference type="PDB" id="3BHF"/>
    </source>
</evidence>
<evidence type="ECO:0007829" key="8">
    <source>
        <dbReference type="PDB" id="3M0O"/>
    </source>
</evidence>
<dbReference type="EC" id="1.5.3.1"/>
<dbReference type="EMBL" id="D16521">
    <property type="protein sequence ID" value="BAA03967.1"/>
    <property type="molecule type" value="Genomic_DNA"/>
</dbReference>
<dbReference type="PIR" id="I39975">
    <property type="entry name" value="I39975"/>
</dbReference>
<dbReference type="PDB" id="1EL5">
    <property type="method" value="X-ray"/>
    <property type="resolution" value="1.80 A"/>
    <property type="chains" value="A/B=2-390"/>
</dbReference>
<dbReference type="PDB" id="1EL7">
    <property type="method" value="X-ray"/>
    <property type="resolution" value="1.90 A"/>
    <property type="chains" value="A/B=2-390"/>
</dbReference>
<dbReference type="PDB" id="1EL8">
    <property type="method" value="X-ray"/>
    <property type="resolution" value="1.90 A"/>
    <property type="chains" value="A/B=2-390"/>
</dbReference>
<dbReference type="PDB" id="1EL9">
    <property type="method" value="X-ray"/>
    <property type="resolution" value="2.00 A"/>
    <property type="chains" value="A/B=2-390"/>
</dbReference>
<dbReference type="PDB" id="1ELI">
    <property type="method" value="X-ray"/>
    <property type="resolution" value="2.00 A"/>
    <property type="chains" value="A/B=2-390"/>
</dbReference>
<dbReference type="PDB" id="1L9C">
    <property type="method" value="X-ray"/>
    <property type="resolution" value="1.90 A"/>
    <property type="chains" value="A/B=2-390"/>
</dbReference>
<dbReference type="PDB" id="1L9D">
    <property type="method" value="X-ray"/>
    <property type="resolution" value="1.95 A"/>
    <property type="chains" value="A/B=2-390"/>
</dbReference>
<dbReference type="PDB" id="1L9E">
    <property type="method" value="X-ray"/>
    <property type="resolution" value="1.85 A"/>
    <property type="chains" value="A/B=2-390"/>
</dbReference>
<dbReference type="PDB" id="2A89">
    <property type="method" value="X-ray"/>
    <property type="resolution" value="1.85 A"/>
    <property type="chains" value="A/B=2-390"/>
</dbReference>
<dbReference type="PDB" id="2GB0">
    <property type="method" value="X-ray"/>
    <property type="resolution" value="1.85 A"/>
    <property type="chains" value="A/B=2-390"/>
</dbReference>
<dbReference type="PDB" id="2GF3">
    <property type="method" value="X-ray"/>
    <property type="resolution" value="1.30 A"/>
    <property type="chains" value="A/B=2-390"/>
</dbReference>
<dbReference type="PDB" id="3BHF">
    <property type="method" value="X-ray"/>
    <property type="resolution" value="2.10 A"/>
    <property type="chains" value="A/B=1-390"/>
</dbReference>
<dbReference type="PDB" id="3BHK">
    <property type="method" value="X-ray"/>
    <property type="resolution" value="1.71 A"/>
    <property type="chains" value="A/B=1-390"/>
</dbReference>
<dbReference type="PDB" id="3M0O">
    <property type="method" value="X-ray"/>
    <property type="resolution" value="1.60 A"/>
    <property type="chains" value="A/B=2-390"/>
</dbReference>
<dbReference type="PDB" id="3M12">
    <property type="method" value="X-ray"/>
    <property type="resolution" value="1.60 A"/>
    <property type="chains" value="A/B=2-390"/>
</dbReference>
<dbReference type="PDB" id="3M13">
    <property type="method" value="X-ray"/>
    <property type="resolution" value="2.10 A"/>
    <property type="chains" value="A/B/C/D=2-382"/>
</dbReference>
<dbReference type="PDB" id="3QSE">
    <property type="method" value="X-ray"/>
    <property type="resolution" value="1.75 A"/>
    <property type="chains" value="A/B=2-390"/>
</dbReference>
<dbReference type="PDB" id="3QSM">
    <property type="method" value="X-ray"/>
    <property type="resolution" value="1.90 A"/>
    <property type="chains" value="A/B=2-390"/>
</dbReference>
<dbReference type="PDB" id="3QSS">
    <property type="method" value="X-ray"/>
    <property type="resolution" value="1.85 A"/>
    <property type="chains" value="A/B=2-390"/>
</dbReference>
<dbReference type="PDBsum" id="1EL5"/>
<dbReference type="PDBsum" id="1EL7"/>
<dbReference type="PDBsum" id="1EL8"/>
<dbReference type="PDBsum" id="1EL9"/>
<dbReference type="PDBsum" id="1ELI"/>
<dbReference type="PDBsum" id="1L9C"/>
<dbReference type="PDBsum" id="1L9D"/>
<dbReference type="PDBsum" id="1L9E"/>
<dbReference type="PDBsum" id="2A89"/>
<dbReference type="PDBsum" id="2GB0"/>
<dbReference type="PDBsum" id="2GF3"/>
<dbReference type="PDBsum" id="3BHF"/>
<dbReference type="PDBsum" id="3BHK"/>
<dbReference type="PDBsum" id="3M0O"/>
<dbReference type="PDBsum" id="3M12"/>
<dbReference type="PDBsum" id="3M13"/>
<dbReference type="PDBsum" id="3QSE"/>
<dbReference type="PDBsum" id="3QSM"/>
<dbReference type="PDBsum" id="3QSS"/>
<dbReference type="SMR" id="P40859"/>
<dbReference type="DrugBank" id="DB03098">
    <property type="generic name" value="[Methylseleno]Acetate"/>
</dbReference>
<dbReference type="DrugBank" id="DB01918">
    <property type="generic name" value="[Methyltelluro]Acetate"/>
</dbReference>
<dbReference type="DrugBank" id="DB03517">
    <property type="generic name" value="[Methylthio]Acetate"/>
</dbReference>
<dbReference type="DrugBank" id="DB03147">
    <property type="generic name" value="Flavin adenine dinucleotide"/>
</dbReference>
<dbReference type="DrugBank" id="DB03366">
    <property type="generic name" value="Imidazole"/>
</dbReference>
<dbReference type="DrugBank" id="DB02083">
    <property type="generic name" value="N,N-dimethylglycine"/>
</dbReference>
<dbReference type="DrugBank" id="DB02543">
    <property type="generic name" value="Pyrrole-2-Carboxylate"/>
</dbReference>
<dbReference type="KEGG" id="ag:BAA03967"/>
<dbReference type="BRENDA" id="1.5.3.1">
    <property type="organism ID" value="691"/>
</dbReference>
<dbReference type="EvolutionaryTrace" id="P40859"/>
<dbReference type="GO" id="GO:0005737">
    <property type="term" value="C:cytoplasm"/>
    <property type="evidence" value="ECO:0007669"/>
    <property type="project" value="UniProtKB-SubCell"/>
</dbReference>
<dbReference type="GO" id="GO:0050660">
    <property type="term" value="F:flavin adenine dinucleotide binding"/>
    <property type="evidence" value="ECO:0007669"/>
    <property type="project" value="InterPro"/>
</dbReference>
<dbReference type="GO" id="GO:0008115">
    <property type="term" value="F:sarcosine oxidase activity"/>
    <property type="evidence" value="ECO:0007669"/>
    <property type="project" value="UniProtKB-UniRule"/>
</dbReference>
<dbReference type="Gene3D" id="3.30.9.10">
    <property type="entry name" value="D-Amino Acid Oxidase, subunit A, domain 2"/>
    <property type="match status" value="1"/>
</dbReference>
<dbReference type="Gene3D" id="3.50.50.60">
    <property type="entry name" value="FAD/NAD(P)-binding domain"/>
    <property type="match status" value="1"/>
</dbReference>
<dbReference type="HAMAP" id="MF_00516">
    <property type="entry name" value="MSOX"/>
    <property type="match status" value="1"/>
</dbReference>
<dbReference type="InterPro" id="IPR006076">
    <property type="entry name" value="FAD-dep_OxRdtase"/>
</dbReference>
<dbReference type="InterPro" id="IPR036188">
    <property type="entry name" value="FAD/NAD-bd_sf"/>
</dbReference>
<dbReference type="InterPro" id="IPR045170">
    <property type="entry name" value="MTOX"/>
</dbReference>
<dbReference type="InterPro" id="IPR006281">
    <property type="entry name" value="SoxA_mon"/>
</dbReference>
<dbReference type="NCBIfam" id="NF008425">
    <property type="entry name" value="PRK11259.1"/>
    <property type="match status" value="1"/>
</dbReference>
<dbReference type="NCBIfam" id="TIGR01377">
    <property type="entry name" value="soxA_mon"/>
    <property type="match status" value="1"/>
</dbReference>
<dbReference type="PANTHER" id="PTHR10961:SF7">
    <property type="entry name" value="FAD DEPENDENT OXIDOREDUCTASE DOMAIN-CONTAINING PROTEIN"/>
    <property type="match status" value="1"/>
</dbReference>
<dbReference type="PANTHER" id="PTHR10961">
    <property type="entry name" value="PEROXISOMAL SARCOSINE OXIDASE"/>
    <property type="match status" value="1"/>
</dbReference>
<dbReference type="Pfam" id="PF01266">
    <property type="entry name" value="DAO"/>
    <property type="match status" value="1"/>
</dbReference>
<dbReference type="SUPFAM" id="SSF54373">
    <property type="entry name" value="FAD-linked reductases, C-terminal domain"/>
    <property type="match status" value="1"/>
</dbReference>
<dbReference type="SUPFAM" id="SSF51905">
    <property type="entry name" value="FAD/NAD(P)-binding domain"/>
    <property type="match status" value="1"/>
</dbReference>
<comment type="function">
    <text>Catalyzes the oxidative demethylation of sarcosine. Can also oxidize other secondary amino acids such as N-methyl-L-alanine.</text>
</comment>
<comment type="catalytic activity">
    <reaction>
        <text>sarcosine + O2 + H2O = formaldehyde + glycine + H2O2</text>
        <dbReference type="Rhea" id="RHEA:13313"/>
        <dbReference type="ChEBI" id="CHEBI:15377"/>
        <dbReference type="ChEBI" id="CHEBI:15379"/>
        <dbReference type="ChEBI" id="CHEBI:16240"/>
        <dbReference type="ChEBI" id="CHEBI:16842"/>
        <dbReference type="ChEBI" id="CHEBI:57305"/>
        <dbReference type="ChEBI" id="CHEBI:57433"/>
        <dbReference type="EC" id="1.5.3.1"/>
    </reaction>
</comment>
<comment type="cofactor">
    <cofactor>
        <name>FAD</name>
        <dbReference type="ChEBI" id="CHEBI:57692"/>
    </cofactor>
    <text>Binds 1 FAD per subunit.</text>
</comment>
<comment type="activity regulation">
    <text>Pyrrole-2-carboxylate is a competitive inhibitor. N-(cyclopropyl)glycine (CPG) is a mechanism-based inhibitor and inactivates the enzyme by covalently modifying the flavin.</text>
</comment>
<comment type="subunit">
    <text>Monomer.</text>
</comment>
<comment type="subcellular location">
    <subcellularLocation>
        <location>Cytoplasm</location>
    </subcellularLocation>
</comment>
<comment type="mass spectrometry"/>
<comment type="similarity">
    <text evidence="3">Belongs to the MSOX/MTOX family. MSOX subfamily.</text>
</comment>
<organism>
    <name type="scientific">Bacillus sp. (strain B-0618)</name>
    <dbReference type="NCBI Taxonomy" id="69000"/>
    <lineage>
        <taxon>Bacteria</taxon>
        <taxon>Bacillati</taxon>
        <taxon>Bacillota</taxon>
        <taxon>Bacilli</taxon>
        <taxon>Bacillales</taxon>
        <taxon>Bacillaceae</taxon>
        <taxon>Bacillus</taxon>
    </lineage>
</organism>
<keyword id="KW-0002">3D-structure</keyword>
<keyword id="KW-0963">Cytoplasm</keyword>
<keyword id="KW-0903">Direct protein sequencing</keyword>
<keyword id="KW-0274">FAD</keyword>
<keyword id="KW-0285">Flavoprotein</keyword>
<keyword id="KW-0560">Oxidoreductase</keyword>
<accession>P40859</accession>
<sequence>MSTHFDVIVVGAGSMGMAAGYQLAKQGVKTLLVDAFDPPHTNGSHHGDTRIIRHAYGEGREYVPLALRSQELWYELEKETHHKIFTKTGVLVFGPKGESAFVAETMEAAKEHSLTVDLLEGDEINKRWPGITVPENYNAIFEPNSGVLFSENCIRAYRELAEARGAKVLTHTRVEDFDISPDSVKIETANGSYTADKLIVSMGAWNSKLLSKLNLDIPLQPYRQVVGFFESDESKYSNDIDFPGFMVEVPNGIYYGFPSFGGCGLKLGYHTFGQKIDPDTINREFGVYPEDESNLRAFLEEYMPGANGELKRGAVCMYTKTLDEHFIIDLHPEHSNVVIAAGFSGHGFKFSSGVGEVLSQLALTGKTEHDISIFSINRPALKESLQKTTI</sequence>
<proteinExistence type="evidence at protein level"/>
<gene>
    <name type="primary">soxA</name>
    <name type="synonym">sox</name>
</gene>
<reference key="1">
    <citation type="journal article" date="1994" name="J. Ferment. Bioeng.">
        <title>Cloning, sequencing, overexpression in Escherichia coil of a sarcosine oxidase-encoding gene linked to the Bacillus creatinase gene.</title>
        <authorList>
            <person name="Suzuki K."/>
            <person name="Sagai H."/>
            <person name="Imamura S."/>
            <person name="Sugiyama M."/>
        </authorList>
    </citation>
    <scope>NUCLEOTIDE SEQUENCE [GENOMIC DNA]</scope>
</reference>
<reference key="2">
    <citation type="submission" date="1995-09" db="EMBL/GenBank/DDBJ databases">
        <authorList>
            <person name="Suzuki K."/>
        </authorList>
    </citation>
    <scope>SEQUENCE REVISION TO 117</scope>
</reference>
<reference key="3">
    <citation type="journal article" date="1999" name="Biochemistry">
        <title>Structure of the flavocoenzyme of two homologous amine oxidases: monomeric sarcosine oxidase and N-methyltryptophan oxidase.</title>
        <authorList>
            <person name="Wagner M.A."/>
            <person name="Khanna P."/>
            <person name="Jorns M.S."/>
        </authorList>
    </citation>
    <scope>CHARACTERIZATION</scope>
    <scope>PROTEIN SEQUENCE OF 313-319</scope>
    <scope>MASS SPECTROMETRY</scope>
</reference>
<reference key="4">
    <citation type="journal article" date="2000" name="Biochemistry">
        <title>Monomeric sarcosine oxidase: 2. Kinetic studies with sarcosine, alternate substrates, and a substrate analogue.</title>
        <authorList>
            <person name="Wagner M.A."/>
            <person name="Jorns M.S."/>
        </authorList>
    </citation>
    <scope>CHARACTERIZATION</scope>
</reference>
<reference key="5">
    <citation type="journal article" date="2000" name="Biochemistry">
        <title>Inactivation of monomeric sarcosine oxidase by reaction with N-(cyclopropyl)glycine.</title>
        <authorList>
            <person name="Zhao G."/>
            <person name="Qu J."/>
            <person name="Davis F.A."/>
            <person name="Jorns M.S."/>
        </authorList>
    </citation>
    <scope>CHARACTERIZATION</scope>
</reference>
<reference key="6">
    <citation type="journal article" date="1999" name="Structure">
        <title>Monomeric sarcosine oxidase: structure of a covalently flavinylated amine oxidizing enzyme.</title>
        <authorList>
            <person name="Trickey P."/>
            <person name="Wagner M.A."/>
            <person name="Jorns M.S."/>
            <person name="Mathews F.S."/>
        </authorList>
    </citation>
    <scope>X-RAY CRYSTALLOGRAPHY (2.0 ANGSTROMS)</scope>
</reference>
<protein>
    <recommendedName>
        <fullName>Monomeric sarcosine oxidase</fullName>
        <shortName>MSOX</shortName>
        <ecNumber>1.5.3.1</ecNumber>
    </recommendedName>
</protein>